<name>HPR_BACC1</name>
<sequence length="185" mass="21733">MKSGEKDYSVKEAMIFSQRIAQLSKALWKCVEKDWQMWIKPYDLNINEHHILTIAYHLKGASISEIAKFGVMHVSTAFNFSKKLEERGYLVFSKKEDDKRNTYIEITDKGEELLLRLMEEYDPENNSVFNGALALRNFYGKFPENIELIAILRNIYGQDFIDIFEKSLEDIEENFTESDQKLVKK</sequence>
<organism>
    <name type="scientific">Bacillus cereus (strain ATCC 10987 / NRS 248)</name>
    <dbReference type="NCBI Taxonomy" id="222523"/>
    <lineage>
        <taxon>Bacteria</taxon>
        <taxon>Bacillati</taxon>
        <taxon>Bacillota</taxon>
        <taxon>Bacilli</taxon>
        <taxon>Bacillales</taxon>
        <taxon>Bacillaceae</taxon>
        <taxon>Bacillus</taxon>
        <taxon>Bacillus cereus group</taxon>
    </lineage>
</organism>
<reference key="1">
    <citation type="journal article" date="2004" name="Nucleic Acids Res.">
        <title>The genome sequence of Bacillus cereus ATCC 10987 reveals metabolic adaptations and a large plasmid related to Bacillus anthracis pXO1.</title>
        <authorList>
            <person name="Rasko D.A."/>
            <person name="Ravel J."/>
            <person name="Oekstad O.A."/>
            <person name="Helgason E."/>
            <person name="Cer R.Z."/>
            <person name="Jiang L."/>
            <person name="Shores K.A."/>
            <person name="Fouts D.E."/>
            <person name="Tourasse N.J."/>
            <person name="Angiuoli S.V."/>
            <person name="Kolonay J.F."/>
            <person name="Nelson W.C."/>
            <person name="Kolstoe A.-B."/>
            <person name="Fraser C.M."/>
            <person name="Read T.D."/>
        </authorList>
    </citation>
    <scope>NUCLEOTIDE SEQUENCE [LARGE SCALE GENOMIC DNA]</scope>
    <source>
        <strain>ATCC 10987 / NRS 248</strain>
    </source>
</reference>
<dbReference type="EMBL" id="AE017194">
    <property type="protein sequence ID" value="AAS40079.1"/>
    <property type="molecule type" value="Genomic_DNA"/>
</dbReference>
<dbReference type="SMR" id="Q73CB7"/>
<dbReference type="KEGG" id="bca:BCE_1149"/>
<dbReference type="HOGENOM" id="CLU_115790_0_0_9"/>
<dbReference type="Proteomes" id="UP000002527">
    <property type="component" value="Chromosome"/>
</dbReference>
<dbReference type="GO" id="GO:0003677">
    <property type="term" value="F:DNA binding"/>
    <property type="evidence" value="ECO:0007669"/>
    <property type="project" value="UniProtKB-UniRule"/>
</dbReference>
<dbReference type="GO" id="GO:0003700">
    <property type="term" value="F:DNA-binding transcription factor activity"/>
    <property type="evidence" value="ECO:0007669"/>
    <property type="project" value="UniProtKB-UniRule"/>
</dbReference>
<dbReference type="GO" id="GO:0045892">
    <property type="term" value="P:negative regulation of DNA-templated transcription"/>
    <property type="evidence" value="ECO:0007669"/>
    <property type="project" value="UniProtKB-UniRule"/>
</dbReference>
<dbReference type="GO" id="GO:0006950">
    <property type="term" value="P:response to stress"/>
    <property type="evidence" value="ECO:0007669"/>
    <property type="project" value="TreeGrafter"/>
</dbReference>
<dbReference type="GO" id="GO:0030435">
    <property type="term" value="P:sporulation resulting in formation of a cellular spore"/>
    <property type="evidence" value="ECO:0007669"/>
    <property type="project" value="UniProtKB-UniRule"/>
</dbReference>
<dbReference type="FunFam" id="1.10.10.10:FF:000194">
    <property type="entry name" value="HTH-type transcriptional regulator Hpr"/>
    <property type="match status" value="1"/>
</dbReference>
<dbReference type="Gene3D" id="1.10.10.10">
    <property type="entry name" value="Winged helix-like DNA-binding domain superfamily/Winged helix DNA-binding domain"/>
    <property type="match status" value="1"/>
</dbReference>
<dbReference type="HAMAP" id="MF_01911">
    <property type="entry name" value="HTH_type_Hpr"/>
    <property type="match status" value="1"/>
</dbReference>
<dbReference type="InterPro" id="IPR000835">
    <property type="entry name" value="HTH_MarR-typ"/>
</dbReference>
<dbReference type="InterPro" id="IPR023488">
    <property type="entry name" value="HTH_tscrpt_reg_Hpr"/>
</dbReference>
<dbReference type="InterPro" id="IPR039422">
    <property type="entry name" value="MarR/SlyA-like"/>
</dbReference>
<dbReference type="InterPro" id="IPR023187">
    <property type="entry name" value="Tscrpt_reg_MarR-type_CS"/>
</dbReference>
<dbReference type="InterPro" id="IPR036388">
    <property type="entry name" value="WH-like_DNA-bd_sf"/>
</dbReference>
<dbReference type="InterPro" id="IPR036390">
    <property type="entry name" value="WH_DNA-bd_sf"/>
</dbReference>
<dbReference type="NCBIfam" id="NF010349">
    <property type="entry name" value="PRK13777.1"/>
    <property type="match status" value="1"/>
</dbReference>
<dbReference type="PANTHER" id="PTHR33164:SF58">
    <property type="entry name" value="DNA-BINDING TRANSCRIPTIONAL REPRESSOR SCOC"/>
    <property type="match status" value="1"/>
</dbReference>
<dbReference type="PANTHER" id="PTHR33164">
    <property type="entry name" value="TRANSCRIPTIONAL REGULATOR, MARR FAMILY"/>
    <property type="match status" value="1"/>
</dbReference>
<dbReference type="Pfam" id="PF01047">
    <property type="entry name" value="MarR"/>
    <property type="match status" value="1"/>
</dbReference>
<dbReference type="SMART" id="SM00347">
    <property type="entry name" value="HTH_MARR"/>
    <property type="match status" value="1"/>
</dbReference>
<dbReference type="SUPFAM" id="SSF46785">
    <property type="entry name" value="Winged helix' DNA-binding domain"/>
    <property type="match status" value="1"/>
</dbReference>
<dbReference type="PROSITE" id="PS01117">
    <property type="entry name" value="HTH_MARR_1"/>
    <property type="match status" value="1"/>
</dbReference>
<dbReference type="PROSITE" id="PS50995">
    <property type="entry name" value="HTH_MARR_2"/>
    <property type="match status" value="1"/>
</dbReference>
<gene>
    <name evidence="1" type="primary">hpr</name>
    <name type="ordered locus">BCE_1149</name>
</gene>
<proteinExistence type="inferred from homology"/>
<evidence type="ECO:0000255" key="1">
    <source>
        <dbReference type="HAMAP-Rule" id="MF_01911"/>
    </source>
</evidence>
<keyword id="KW-0238">DNA-binding</keyword>
<keyword id="KW-0678">Repressor</keyword>
<keyword id="KW-0749">Sporulation</keyword>
<keyword id="KW-0804">Transcription</keyword>
<keyword id="KW-0805">Transcription regulation</keyword>
<accession>Q73CB7</accession>
<comment type="function">
    <text evidence="1">Negative regulator of protease production and sporulation.</text>
</comment>
<comment type="subunit">
    <text evidence="1">Homodimer.</text>
</comment>
<protein>
    <recommendedName>
        <fullName evidence="1">HTH-type transcriptional regulator Hpr</fullName>
    </recommendedName>
    <alternativeName>
        <fullName evidence="1">Protease production regulatory protein Hpr</fullName>
    </alternativeName>
</protein>
<feature type="chain" id="PRO_0000343618" description="HTH-type transcriptional regulator Hpr">
    <location>
        <begin position="1"/>
        <end position="185"/>
    </location>
</feature>
<feature type="domain" description="HTH marR-type" evidence="1">
    <location>
        <begin position="13"/>
        <end position="157"/>
    </location>
</feature>
<feature type="DNA-binding region" description="H-T-H motif" evidence="1">
    <location>
        <begin position="63"/>
        <end position="86"/>
    </location>
</feature>